<comment type="function">
    <text evidence="1">This protein binds specifically to 23S rRNA; its binding is stimulated by other ribosomal proteins, e.g. L4, L17, and L20. It is important during the early stages of 50S assembly. It makes multiple contacts with different domains of the 23S rRNA in the assembled 50S subunit and ribosome (By similarity).</text>
</comment>
<comment type="function">
    <text evidence="1">The globular domain of the protein is located near the polypeptide exit tunnel on the outside of the subunit, while an extended beta-hairpin is found that lines the wall of the exit tunnel in the center of the 70S ribosome.</text>
</comment>
<comment type="subunit">
    <text evidence="1">Part of the 50S ribosomal subunit.</text>
</comment>
<comment type="similarity">
    <text evidence="1">Belongs to the universal ribosomal protein uL22 family.</text>
</comment>
<accession>Q1QN25</accession>
<reference key="1">
    <citation type="submission" date="2006-03" db="EMBL/GenBank/DDBJ databases">
        <title>Complete sequence of chromosome of Nitrobacter hamburgensis X14.</title>
        <authorList>
            <consortium name="US DOE Joint Genome Institute"/>
            <person name="Copeland A."/>
            <person name="Lucas S."/>
            <person name="Lapidus A."/>
            <person name="Barry K."/>
            <person name="Detter J.C."/>
            <person name="Glavina del Rio T."/>
            <person name="Hammon N."/>
            <person name="Israni S."/>
            <person name="Dalin E."/>
            <person name="Tice H."/>
            <person name="Pitluck S."/>
            <person name="Chain P."/>
            <person name="Malfatti S."/>
            <person name="Shin M."/>
            <person name="Vergez L."/>
            <person name="Schmutz J."/>
            <person name="Larimer F."/>
            <person name="Land M."/>
            <person name="Hauser L."/>
            <person name="Kyrpides N."/>
            <person name="Ivanova N."/>
            <person name="Ward B."/>
            <person name="Arp D."/>
            <person name="Klotz M."/>
            <person name="Stein L."/>
            <person name="O'Mullan G."/>
            <person name="Starkenburg S."/>
            <person name="Sayavedra L."/>
            <person name="Poret-Peterson A.T."/>
            <person name="Gentry M.E."/>
            <person name="Bruce D."/>
            <person name="Richardson P."/>
        </authorList>
    </citation>
    <scope>NUCLEOTIDE SEQUENCE [LARGE SCALE GENOMIC DNA]</scope>
    <source>
        <strain>DSM 10229 / NCIMB 13809 / X14</strain>
    </source>
</reference>
<keyword id="KW-1185">Reference proteome</keyword>
<keyword id="KW-0687">Ribonucleoprotein</keyword>
<keyword id="KW-0689">Ribosomal protein</keyword>
<keyword id="KW-0694">RNA-binding</keyword>
<keyword id="KW-0699">rRNA-binding</keyword>
<protein>
    <recommendedName>
        <fullName evidence="1">Large ribosomal subunit protein uL22</fullName>
    </recommendedName>
    <alternativeName>
        <fullName evidence="2">50S ribosomal protein L22</fullName>
    </alternativeName>
</protein>
<name>RL22_NITHX</name>
<gene>
    <name evidence="1" type="primary">rplV</name>
    <name type="ordered locus">Nham_1550</name>
</gene>
<evidence type="ECO:0000255" key="1">
    <source>
        <dbReference type="HAMAP-Rule" id="MF_01331"/>
    </source>
</evidence>
<evidence type="ECO:0000305" key="2"/>
<dbReference type="EMBL" id="CP000319">
    <property type="protein sequence ID" value="ABE62372.1"/>
    <property type="molecule type" value="Genomic_DNA"/>
</dbReference>
<dbReference type="RefSeq" id="WP_011510059.1">
    <property type="nucleotide sequence ID" value="NC_007964.1"/>
</dbReference>
<dbReference type="SMR" id="Q1QN25"/>
<dbReference type="STRING" id="323097.Nham_1550"/>
<dbReference type="KEGG" id="nha:Nham_1550"/>
<dbReference type="eggNOG" id="COG0091">
    <property type="taxonomic scope" value="Bacteria"/>
</dbReference>
<dbReference type="HOGENOM" id="CLU_083987_3_0_5"/>
<dbReference type="OrthoDB" id="9805969at2"/>
<dbReference type="Proteomes" id="UP000001953">
    <property type="component" value="Chromosome"/>
</dbReference>
<dbReference type="GO" id="GO:0022625">
    <property type="term" value="C:cytosolic large ribosomal subunit"/>
    <property type="evidence" value="ECO:0007669"/>
    <property type="project" value="TreeGrafter"/>
</dbReference>
<dbReference type="GO" id="GO:0019843">
    <property type="term" value="F:rRNA binding"/>
    <property type="evidence" value="ECO:0007669"/>
    <property type="project" value="UniProtKB-UniRule"/>
</dbReference>
<dbReference type="GO" id="GO:0003735">
    <property type="term" value="F:structural constituent of ribosome"/>
    <property type="evidence" value="ECO:0007669"/>
    <property type="project" value="InterPro"/>
</dbReference>
<dbReference type="GO" id="GO:0006412">
    <property type="term" value="P:translation"/>
    <property type="evidence" value="ECO:0007669"/>
    <property type="project" value="UniProtKB-UniRule"/>
</dbReference>
<dbReference type="CDD" id="cd00336">
    <property type="entry name" value="Ribosomal_L22"/>
    <property type="match status" value="1"/>
</dbReference>
<dbReference type="Gene3D" id="3.90.470.10">
    <property type="entry name" value="Ribosomal protein L22/L17"/>
    <property type="match status" value="1"/>
</dbReference>
<dbReference type="HAMAP" id="MF_01331_B">
    <property type="entry name" value="Ribosomal_uL22_B"/>
    <property type="match status" value="1"/>
</dbReference>
<dbReference type="InterPro" id="IPR001063">
    <property type="entry name" value="Ribosomal_uL22"/>
</dbReference>
<dbReference type="InterPro" id="IPR005727">
    <property type="entry name" value="Ribosomal_uL22_bac/chlpt-type"/>
</dbReference>
<dbReference type="InterPro" id="IPR047867">
    <property type="entry name" value="Ribosomal_uL22_bac/org-type"/>
</dbReference>
<dbReference type="InterPro" id="IPR036394">
    <property type="entry name" value="Ribosomal_uL22_sf"/>
</dbReference>
<dbReference type="NCBIfam" id="TIGR01044">
    <property type="entry name" value="rplV_bact"/>
    <property type="match status" value="1"/>
</dbReference>
<dbReference type="PANTHER" id="PTHR13501">
    <property type="entry name" value="CHLOROPLAST 50S RIBOSOMAL PROTEIN L22-RELATED"/>
    <property type="match status" value="1"/>
</dbReference>
<dbReference type="PANTHER" id="PTHR13501:SF8">
    <property type="entry name" value="LARGE RIBOSOMAL SUBUNIT PROTEIN UL22M"/>
    <property type="match status" value="1"/>
</dbReference>
<dbReference type="Pfam" id="PF00237">
    <property type="entry name" value="Ribosomal_L22"/>
    <property type="match status" value="1"/>
</dbReference>
<dbReference type="SUPFAM" id="SSF54843">
    <property type="entry name" value="Ribosomal protein L22"/>
    <property type="match status" value="1"/>
</dbReference>
<organism>
    <name type="scientific">Nitrobacter hamburgensis (strain DSM 10229 / NCIMB 13809 / X14)</name>
    <dbReference type="NCBI Taxonomy" id="323097"/>
    <lineage>
        <taxon>Bacteria</taxon>
        <taxon>Pseudomonadati</taxon>
        <taxon>Pseudomonadota</taxon>
        <taxon>Alphaproteobacteria</taxon>
        <taxon>Hyphomicrobiales</taxon>
        <taxon>Nitrobacteraceae</taxon>
        <taxon>Nitrobacter</taxon>
    </lineage>
</organism>
<feature type="chain" id="PRO_1000052616" description="Large ribosomal subunit protein uL22">
    <location>
        <begin position="1"/>
        <end position="128"/>
    </location>
</feature>
<proteinExistence type="inferred from homology"/>
<sequence>MSKPKRERSLPENEAKAIARMLRVSPQKLNLVAQLIRGRKASAALADLQFSRKRIAGDVKKCLESAIANAENNHDLDVDELVVAQAFVGNGMVMKRFAPRGRGRSGRIYKPFSQLTIVVRQVEAEASA</sequence>